<comment type="function">
    <text evidence="2 5">Hydrolyzes the second messenger 3',5'-cyclic AMP (cAMP), which is a key regulator of many important physiological processes (By similarity). Antagonizes dorsal D (DD) motor neuron respecification by reducing levels of cAMP (PubMed:29033363).</text>
</comment>
<comment type="catalytic activity">
    <reaction evidence="2">
        <text>3',5'-cyclic AMP + H2O = AMP + H(+)</text>
        <dbReference type="Rhea" id="RHEA:25277"/>
        <dbReference type="ChEBI" id="CHEBI:15377"/>
        <dbReference type="ChEBI" id="CHEBI:15378"/>
        <dbReference type="ChEBI" id="CHEBI:58165"/>
        <dbReference type="ChEBI" id="CHEBI:456215"/>
        <dbReference type="EC" id="3.1.4.53"/>
    </reaction>
</comment>
<comment type="cofactor">
    <cofactor evidence="1">
        <name>a divalent metal cation</name>
        <dbReference type="ChEBI" id="CHEBI:60240"/>
    </cofactor>
    <text evidence="1">Binds 2 divalent metal cations per subunit. Site 1 may preferentially bind zinc ions, while site 2 has a preference for magnesium and/or manganese ions.</text>
</comment>
<comment type="alternative products">
    <event type="alternative splicing"/>
    <isoform>
        <id>Q22000-1</id>
        <name>d</name>
        <sequence type="displayed"/>
    </isoform>
    <isoform>
        <id>Q22000-2</id>
        <name>a</name>
        <sequence type="described" ref="VSP_014345 VSP_014352"/>
    </isoform>
    <isoform>
        <id>Q22000-3</id>
        <name>b</name>
        <sequence type="described" ref="VSP_014347 VSP_014350"/>
    </isoform>
    <isoform>
        <id>Q22000-4</id>
        <name>c</name>
        <sequence type="described" ref="VSP_014346 VSP_014351"/>
    </isoform>
    <isoform>
        <id>Q22000-5</id>
        <name>e</name>
        <sequence type="described" ref="VSP_014348 VSP_014349"/>
    </isoform>
    <isoform>
        <id>Q22000-6</id>
        <name>f</name>
        <sequence type="described" ref="VSP_014353 VSP_014354"/>
    </isoform>
</comment>
<comment type="tissue specificity">
    <text evidence="5">Expressed in dorsal D (DD) motor neurons and several other neurons at the L1 stage. Expression in DD neurons decreases gradually beginning in the late L1 stage. Highly expressed in adult ventral D (VD) motor neurons, but diminished in adult DD motor neurons.</text>
</comment>
<comment type="similarity">
    <text evidence="6">Belongs to the cyclic nucleotide phosphodiesterase family.</text>
</comment>
<sequence length="674" mass="75389">MPRRRGSSSSSSAAGGSGGGGGFGFSSLRRELHLHNFFRTSSPSASSTSRTPPAALPPRTSAVTIPGSNHKLTSSASSYHPPRELTVSTFSAGSATAADGLGGAHLTPSLSSSVHARRESFLYRASDDLREASSLRPVSRASSIASNEHGHGDDLIVTPFAQLLASLRNVRSNLISITNIQNSDDSRHANRSAKRPPLHNIELPDDVVHCAHDTLEELDWCLDQLETIQTHRSVSEMASSKFRKMLNKELSHFAESSKSGTQVSKFLITTYMDKEEDEPSIEIEVPTEVQGPSTSGPMTLSILKKAQTAAMNKISGVRKLRAPSHDGHVPEYGVNCAREIAVHMQRLDDWGPDVFKIDELSKNHSLTVVTFSLLRQRNLFKTFEIHQSTLVTYLLNLEHHYRNNHYHNFIHAADVAQSMHVLLMSPVLTEVFTDLEVLAAIFAGAVHDVDHPGFTNQYLINSNNELAIMYNDESVLEQHHLAVAFKLLQDSNCDFLANLSRKQRLQFRKIVIDMVLATDMSKHMSLLADLKTMVEAKKVAGNNVIVLDKYNDKIQVLQSMIHLADLSNPTKPIELYQQWNQRIMEEYWRQGDKEKELGLEISPMCDRGNVTIEKSQVGFIDYIVHPLYETWADLVYPDAQNILDQLEENREWYQSRIPEEPDTARTVTEDDEHK</sequence>
<proteinExistence type="evidence at transcript level"/>
<protein>
    <recommendedName>
        <fullName evidence="6">Probable 3',5'-cyclic-AMP phosphodiesterase pde-4</fullName>
        <ecNumber evidence="2">3.1.4.53</ecNumber>
    </recommendedName>
</protein>
<feature type="chain" id="PRO_0000198847" description="Probable 3',5'-cyclic-AMP phosphodiesterase pde-4">
    <location>
        <begin position="1"/>
        <end position="674"/>
    </location>
</feature>
<feature type="domain" description="PDEase" evidence="3">
    <location>
        <begin position="328"/>
        <end position="660"/>
    </location>
</feature>
<feature type="region of interest" description="Disordered" evidence="4">
    <location>
        <begin position="1"/>
        <end position="82"/>
    </location>
</feature>
<feature type="compositionally biased region" description="Gly residues" evidence="4">
    <location>
        <begin position="15"/>
        <end position="24"/>
    </location>
</feature>
<feature type="compositionally biased region" description="Low complexity" evidence="4">
    <location>
        <begin position="39"/>
        <end position="62"/>
    </location>
</feature>
<feature type="compositionally biased region" description="Polar residues" evidence="4">
    <location>
        <begin position="66"/>
        <end position="78"/>
    </location>
</feature>
<feature type="active site" description="Proton donor" evidence="1">
    <location>
        <position position="407"/>
    </location>
</feature>
<feature type="binding site" evidence="1">
    <location>
        <position position="411"/>
    </location>
    <ligand>
        <name>a divalent metal cation</name>
        <dbReference type="ChEBI" id="CHEBI:60240"/>
        <label>1</label>
    </ligand>
</feature>
<feature type="binding site" evidence="1">
    <location>
        <position position="447"/>
    </location>
    <ligand>
        <name>a divalent metal cation</name>
        <dbReference type="ChEBI" id="CHEBI:60240"/>
        <label>1</label>
    </ligand>
</feature>
<feature type="binding site" evidence="1">
    <location>
        <position position="448"/>
    </location>
    <ligand>
        <name>a divalent metal cation</name>
        <dbReference type="ChEBI" id="CHEBI:60240"/>
        <label>1</label>
    </ligand>
</feature>
<feature type="binding site" evidence="1">
    <location>
        <position position="448"/>
    </location>
    <ligand>
        <name>a divalent metal cation</name>
        <dbReference type="ChEBI" id="CHEBI:60240"/>
        <label>2</label>
    </ligand>
</feature>
<feature type="binding site" evidence="1">
    <location>
        <position position="565"/>
    </location>
    <ligand>
        <name>a divalent metal cation</name>
        <dbReference type="ChEBI" id="CHEBI:60240"/>
        <label>1</label>
    </ligand>
</feature>
<feature type="splice variant" id="VSP_014345" description="In isoform a." evidence="6">
    <location>
        <begin position="1"/>
        <end position="125"/>
    </location>
</feature>
<feature type="splice variant" id="VSP_014346" description="In isoform c." evidence="6">
    <location>
        <begin position="1"/>
        <end position="75"/>
    </location>
</feature>
<feature type="splice variant" id="VSP_014347" description="In isoform b." evidence="6">
    <location>
        <begin position="1"/>
        <end position="62"/>
    </location>
</feature>
<feature type="splice variant" id="VSP_014348" description="In isoform e." evidence="6">
    <location>
        <begin position="1"/>
        <end position="48"/>
    </location>
</feature>
<feature type="splice variant" id="VSP_014349" description="In isoform e." evidence="6">
    <original>SRTPPAALPPRTSAVTIPGSNHKLTSSASSYHPPRELTVSTFS</original>
    <variation>MCGSRRHLRRNEDGMNGVARRKQFKLRPWQSTALPSRHDHYSC</variation>
    <location>
        <begin position="49"/>
        <end position="91"/>
    </location>
</feature>
<feature type="splice variant" id="VSP_014350" description="In isoform b." evidence="6">
    <original>VTIPGSNHKLTSSASSYHPPRELTVSTFS</original>
    <variation>MNGVARRKQFKLRPWQSTALPSRHDHYSC</variation>
    <location>
        <begin position="63"/>
        <end position="91"/>
    </location>
</feature>
<feature type="splice variant" id="VSP_014351" description="In isoform c." evidence="6">
    <original>ASSYHPPRELTVSTF</original>
    <variation>MTSRRHTVWFVPGSR</variation>
    <location>
        <begin position="76"/>
        <end position="90"/>
    </location>
</feature>
<feature type="splice variant" id="VSP_014352" description="In isoform a." evidence="6">
    <original>SDDLREASSLRPVSRASSIASNEHG</original>
    <variation>MSISLINNNNRSVRRKFGESGFTLR</variation>
    <location>
        <begin position="126"/>
        <end position="150"/>
    </location>
</feature>
<feature type="splice variant" id="VSP_014353" description="In isoform f." evidence="6">
    <original>HGDDLIVT</original>
    <variation>YVILYIFL</variation>
    <location>
        <begin position="151"/>
        <end position="158"/>
    </location>
</feature>
<feature type="splice variant" id="VSP_014354" description="In isoform f." evidence="6">
    <location>
        <begin position="159"/>
        <end position="674"/>
    </location>
</feature>
<name>PDE4_CAEEL</name>
<dbReference type="EC" id="3.1.4.53" evidence="2"/>
<dbReference type="EMBL" id="FO081170">
    <property type="protein sequence ID" value="CCD69643.1"/>
    <property type="molecule type" value="Genomic_DNA"/>
</dbReference>
<dbReference type="EMBL" id="FO081170">
    <property type="protein sequence ID" value="CCD69647.1"/>
    <property type="molecule type" value="Genomic_DNA"/>
</dbReference>
<dbReference type="EMBL" id="FO081170">
    <property type="protein sequence ID" value="CCD69649.1"/>
    <property type="molecule type" value="Genomic_DNA"/>
</dbReference>
<dbReference type="EMBL" id="FO081170">
    <property type="protein sequence ID" value="CCD69644.1"/>
    <property type="molecule type" value="Genomic_DNA"/>
</dbReference>
<dbReference type="EMBL" id="FO081170">
    <property type="protein sequence ID" value="CCD69648.1"/>
    <property type="molecule type" value="Genomic_DNA"/>
</dbReference>
<dbReference type="EMBL" id="FO081170">
    <property type="protein sequence ID" value="CCD69645.1"/>
    <property type="molecule type" value="Genomic_DNA"/>
</dbReference>
<dbReference type="PIR" id="T16769">
    <property type="entry name" value="T16769"/>
</dbReference>
<dbReference type="RefSeq" id="NP_001379885.1">
    <molecule id="Q22000-3"/>
    <property type="nucleotide sequence ID" value="NM_001393119.1"/>
</dbReference>
<dbReference type="RefSeq" id="NP_001379886.1">
    <molecule id="Q22000-4"/>
    <property type="nucleotide sequence ID" value="NM_001393120.1"/>
</dbReference>
<dbReference type="RefSeq" id="NP_495600.1">
    <molecule id="Q22000-5"/>
    <property type="nucleotide sequence ID" value="NM_063199.7"/>
</dbReference>
<dbReference type="RefSeq" id="NP_495601.1">
    <molecule id="Q22000-2"/>
    <property type="nucleotide sequence ID" value="NM_063200.5"/>
</dbReference>
<dbReference type="RefSeq" id="NP_871944.1">
    <property type="nucleotide sequence ID" value="NM_182144.3"/>
</dbReference>
<dbReference type="RefSeq" id="NP_871945.1">
    <molecule id="Q22000-1"/>
    <property type="nucleotide sequence ID" value="NM_182145.6"/>
</dbReference>
<dbReference type="RefSeq" id="NP_871946.1">
    <property type="nucleotide sequence ID" value="NM_182146.3"/>
</dbReference>
<dbReference type="RefSeq" id="NP_871947.1">
    <molecule id="Q22000-6"/>
    <property type="nucleotide sequence ID" value="NM_182147.5"/>
</dbReference>
<dbReference type="SMR" id="Q22000"/>
<dbReference type="BioGRID" id="39569">
    <property type="interactions" value="2"/>
</dbReference>
<dbReference type="FunCoup" id="Q22000">
    <property type="interactions" value="1072"/>
</dbReference>
<dbReference type="STRING" id="6239.R153.1d.1"/>
<dbReference type="PaxDb" id="6239-R153.1d"/>
<dbReference type="PeptideAtlas" id="Q22000"/>
<dbReference type="EnsemblMetazoa" id="R153.1a.1">
    <molecule id="Q22000-2"/>
    <property type="protein sequence ID" value="R153.1a.1"/>
    <property type="gene ID" value="WBGene00020114"/>
</dbReference>
<dbReference type="EnsemblMetazoa" id="R153.1b.1">
    <molecule id="Q22000-5"/>
    <property type="protein sequence ID" value="R153.1b.1"/>
    <property type="gene ID" value="WBGene00020114"/>
</dbReference>
<dbReference type="EnsemblMetazoa" id="R153.1c.1">
    <molecule id="Q22000-4"/>
    <property type="protein sequence ID" value="R153.1c.1"/>
    <property type="gene ID" value="WBGene00020114"/>
</dbReference>
<dbReference type="EnsemblMetazoa" id="R153.1d.1">
    <molecule id="Q22000-1"/>
    <property type="protein sequence ID" value="R153.1d.1"/>
    <property type="gene ID" value="WBGene00020114"/>
</dbReference>
<dbReference type="EnsemblMetazoa" id="R153.1e.1">
    <molecule id="Q22000-3"/>
    <property type="protein sequence ID" value="R153.1e.1"/>
    <property type="gene ID" value="WBGene00020114"/>
</dbReference>
<dbReference type="EnsemblMetazoa" id="R153.1e.2">
    <molecule id="Q22000-3"/>
    <property type="protein sequence ID" value="R153.1e.2"/>
    <property type="gene ID" value="WBGene00020114"/>
</dbReference>
<dbReference type="EnsemblMetazoa" id="R153.1f.1">
    <molecule id="Q22000-6"/>
    <property type="protein sequence ID" value="R153.1f.1"/>
    <property type="gene ID" value="WBGene00020114"/>
</dbReference>
<dbReference type="GeneID" id="174235"/>
<dbReference type="KEGG" id="cel:CELE_R153.1"/>
<dbReference type="UCSC" id="R153.1b">
    <molecule id="Q22000-1"/>
    <property type="organism name" value="c. elegans"/>
</dbReference>
<dbReference type="AGR" id="WB:WBGene00020114"/>
<dbReference type="CTD" id="174235"/>
<dbReference type="WormBase" id="R153.1a">
    <molecule id="Q22000-2"/>
    <property type="protein sequence ID" value="CE02038"/>
    <property type="gene ID" value="WBGene00020114"/>
    <property type="gene designation" value="pde-4"/>
</dbReference>
<dbReference type="WormBase" id="R153.1b">
    <molecule id="Q22000-5"/>
    <property type="protein sequence ID" value="CE28641"/>
    <property type="gene ID" value="WBGene00020114"/>
    <property type="gene designation" value="pde-4"/>
</dbReference>
<dbReference type="WormBase" id="R153.1c">
    <molecule id="Q22000-4"/>
    <property type="protein sequence ID" value="CE32060"/>
    <property type="gene ID" value="WBGene00020114"/>
    <property type="gene designation" value="pde-4"/>
</dbReference>
<dbReference type="WormBase" id="R153.1d">
    <molecule id="Q22000-1"/>
    <property type="protein sequence ID" value="CE33438"/>
    <property type="gene ID" value="WBGene00020114"/>
    <property type="gene designation" value="pde-4"/>
</dbReference>
<dbReference type="WormBase" id="R153.1e">
    <molecule id="Q22000-3"/>
    <property type="protein sequence ID" value="CE33439"/>
    <property type="gene ID" value="WBGene00020114"/>
    <property type="gene designation" value="pde-4"/>
</dbReference>
<dbReference type="WormBase" id="R153.1f">
    <molecule id="Q22000-6"/>
    <property type="protein sequence ID" value="CE33440"/>
    <property type="gene ID" value="WBGene00020114"/>
    <property type="gene designation" value="pde-4"/>
</dbReference>
<dbReference type="eggNOG" id="KOG3689">
    <property type="taxonomic scope" value="Eukaryota"/>
</dbReference>
<dbReference type="HOGENOM" id="CLU_005940_8_0_1"/>
<dbReference type="InParanoid" id="Q22000"/>
<dbReference type="OMA" id="SWPTSFY"/>
<dbReference type="OrthoDB" id="189220at2759"/>
<dbReference type="PhylomeDB" id="Q22000"/>
<dbReference type="Reactome" id="R-CEL-180024">
    <property type="pathway name" value="DARPP-32 events"/>
</dbReference>
<dbReference type="Reactome" id="R-CEL-418555">
    <property type="pathway name" value="G alpha (s) signalling events"/>
</dbReference>
<dbReference type="Reactome" id="R-CEL-9860927">
    <property type="pathway name" value="Turbulent (oscillatory, disturbed) flow shear stress activates signaling by PIEZO1 and integrins in endothelial cells"/>
</dbReference>
<dbReference type="PRO" id="PR:Q22000"/>
<dbReference type="Proteomes" id="UP000001940">
    <property type="component" value="Chromosome II"/>
</dbReference>
<dbReference type="Bgee" id="WBGene00020114">
    <property type="expression patterns" value="Expressed in larva and 3 other cell types or tissues"/>
</dbReference>
<dbReference type="ExpressionAtlas" id="Q22000">
    <property type="expression patterns" value="baseline and differential"/>
</dbReference>
<dbReference type="GO" id="GO:0045202">
    <property type="term" value="C:synapse"/>
    <property type="evidence" value="ECO:0000314"/>
    <property type="project" value="WormBase"/>
</dbReference>
<dbReference type="GO" id="GO:0004115">
    <property type="term" value="F:3',5'-cyclic-AMP phosphodiesterase activity"/>
    <property type="evidence" value="ECO:0000250"/>
    <property type="project" value="WormBase"/>
</dbReference>
<dbReference type="GO" id="GO:0047555">
    <property type="term" value="F:3',5'-cyclic-GMP phosphodiesterase activity"/>
    <property type="evidence" value="ECO:0000318"/>
    <property type="project" value="GO_Central"/>
</dbReference>
<dbReference type="GO" id="GO:0046872">
    <property type="term" value="F:metal ion binding"/>
    <property type="evidence" value="ECO:0007669"/>
    <property type="project" value="UniProtKB-KW"/>
</dbReference>
<dbReference type="GO" id="GO:0007193">
    <property type="term" value="P:adenylate cyclase-inhibiting G protein-coupled receptor signaling pathway"/>
    <property type="evidence" value="ECO:0000315"/>
    <property type="project" value="UniProtKB"/>
</dbReference>
<dbReference type="GO" id="GO:0006198">
    <property type="term" value="P:cAMP catabolic process"/>
    <property type="evidence" value="ECO:0000250"/>
    <property type="project" value="WormBase"/>
</dbReference>
<dbReference type="GO" id="GO:0019933">
    <property type="term" value="P:cAMP-mediated signaling"/>
    <property type="evidence" value="ECO:0000318"/>
    <property type="project" value="GO_Central"/>
</dbReference>
<dbReference type="GO" id="GO:0106072">
    <property type="term" value="P:negative regulation of adenylate cyclase-activating G protein-coupled receptor signaling pathway"/>
    <property type="evidence" value="ECO:0000316"/>
    <property type="project" value="WormBase"/>
</dbReference>
<dbReference type="GO" id="GO:0040013">
    <property type="term" value="P:negative regulation of locomotion"/>
    <property type="evidence" value="ECO:0000315"/>
    <property type="project" value="WormBase"/>
</dbReference>
<dbReference type="GO" id="GO:0030431">
    <property type="term" value="P:sleep"/>
    <property type="evidence" value="ECO:0000315"/>
    <property type="project" value="WormBase"/>
</dbReference>
<dbReference type="CDD" id="cd00077">
    <property type="entry name" value="HDc"/>
    <property type="match status" value="1"/>
</dbReference>
<dbReference type="FunFam" id="1.10.1300.10:FF:000001">
    <property type="entry name" value="Phosphodiesterase"/>
    <property type="match status" value="1"/>
</dbReference>
<dbReference type="Gene3D" id="1.10.1300.10">
    <property type="entry name" value="3'5'-cyclic nucleotide phosphodiesterase, catalytic domain"/>
    <property type="match status" value="1"/>
</dbReference>
<dbReference type="InterPro" id="IPR003607">
    <property type="entry name" value="HD/PDEase_dom"/>
</dbReference>
<dbReference type="InterPro" id="IPR040844">
    <property type="entry name" value="PDE4_UCR"/>
</dbReference>
<dbReference type="InterPro" id="IPR023088">
    <property type="entry name" value="PDEase"/>
</dbReference>
<dbReference type="InterPro" id="IPR002073">
    <property type="entry name" value="PDEase_catalytic_dom"/>
</dbReference>
<dbReference type="InterPro" id="IPR036971">
    <property type="entry name" value="PDEase_catalytic_dom_sf"/>
</dbReference>
<dbReference type="InterPro" id="IPR023174">
    <property type="entry name" value="PDEase_CS"/>
</dbReference>
<dbReference type="PANTHER" id="PTHR11347">
    <property type="entry name" value="CYCLIC NUCLEOTIDE PHOSPHODIESTERASE"/>
    <property type="match status" value="1"/>
</dbReference>
<dbReference type="Pfam" id="PF18100">
    <property type="entry name" value="PDE4_UCR"/>
    <property type="match status" value="1"/>
</dbReference>
<dbReference type="Pfam" id="PF00233">
    <property type="entry name" value="PDEase_I"/>
    <property type="match status" value="1"/>
</dbReference>
<dbReference type="PRINTS" id="PR00387">
    <property type="entry name" value="PDIESTERASE1"/>
</dbReference>
<dbReference type="SMART" id="SM00471">
    <property type="entry name" value="HDc"/>
    <property type="match status" value="1"/>
</dbReference>
<dbReference type="SUPFAM" id="SSF109604">
    <property type="entry name" value="HD-domain/PDEase-like"/>
    <property type="match status" value="1"/>
</dbReference>
<dbReference type="PROSITE" id="PS00126">
    <property type="entry name" value="PDEASE_I_1"/>
    <property type="match status" value="1"/>
</dbReference>
<dbReference type="PROSITE" id="PS51845">
    <property type="entry name" value="PDEASE_I_2"/>
    <property type="match status" value="1"/>
</dbReference>
<keyword id="KW-0025">Alternative splicing</keyword>
<keyword id="KW-0114">cAMP</keyword>
<keyword id="KW-0378">Hydrolase</keyword>
<keyword id="KW-0479">Metal-binding</keyword>
<keyword id="KW-1185">Reference proteome</keyword>
<organism>
    <name type="scientific">Caenorhabditis elegans</name>
    <dbReference type="NCBI Taxonomy" id="6239"/>
    <lineage>
        <taxon>Eukaryota</taxon>
        <taxon>Metazoa</taxon>
        <taxon>Ecdysozoa</taxon>
        <taxon>Nematoda</taxon>
        <taxon>Chromadorea</taxon>
        <taxon>Rhabditida</taxon>
        <taxon>Rhabditina</taxon>
        <taxon>Rhabditomorpha</taxon>
        <taxon>Rhabditoidea</taxon>
        <taxon>Rhabditidae</taxon>
        <taxon>Peloderinae</taxon>
        <taxon>Caenorhabditis</taxon>
    </lineage>
</organism>
<evidence type="ECO:0000250" key="1"/>
<evidence type="ECO:0000250" key="2">
    <source>
        <dbReference type="UniProtKB" id="P27815"/>
    </source>
</evidence>
<evidence type="ECO:0000255" key="3">
    <source>
        <dbReference type="PROSITE-ProRule" id="PRU01192"/>
    </source>
</evidence>
<evidence type="ECO:0000256" key="4">
    <source>
        <dbReference type="SAM" id="MobiDB-lite"/>
    </source>
</evidence>
<evidence type="ECO:0000269" key="5">
    <source>
    </source>
</evidence>
<evidence type="ECO:0000305" key="6"/>
<reference key="1">
    <citation type="journal article" date="1998" name="Science">
        <title>Genome sequence of the nematode C. elegans: a platform for investigating biology.</title>
        <authorList>
            <consortium name="The C. elegans sequencing consortium"/>
        </authorList>
    </citation>
    <scope>NUCLEOTIDE SEQUENCE [LARGE SCALE GENOMIC DNA]</scope>
    <scope>ALTERNATIVE SPLICING</scope>
    <source>
        <strain>Bristol N2</strain>
    </source>
</reference>
<reference key="2">
    <citation type="journal article" date="2017" name="Dev. Cell">
        <title>Convergent Transcriptional Programs Regulate cAMP Levels in C. elegans GABAergic Motor Neurons.</title>
        <authorList>
            <person name="Yu B."/>
            <person name="Wang X."/>
            <person name="Wei S."/>
            <person name="Fu T."/>
            <person name="Dzakah E.E."/>
            <person name="Waqas A."/>
            <person name="Walthall W.W."/>
            <person name="Shan G."/>
        </authorList>
    </citation>
    <scope>FUNCTION</scope>
    <scope>TISSUE SPECIFICITY</scope>
</reference>
<accession>Q22000</accession>
<accession>Q86NE7</accession>
<accession>Q86NE8</accession>
<accession>Q86NE9</accession>
<accession>Q8IFZ3</accession>
<accession>Q95ZQ6</accession>
<gene>
    <name type="primary">pde-4</name>
    <name type="ORF">R153.1</name>
</gene>